<gene>
    <name type="primary">Has2</name>
</gene>
<sequence>MHCERFLCILRIIGTTLFGVSLLLGITAAYIVGYQFIQTDNYYFSFGLYGAFLASHLIIQSLFAFLEHRKMKKSLETPIKLNKTVALCIAAYQEDPDYLRKCLQSVKRLTYPGIKVVMVIDGNSDDDLYMMDIFSEVMGRDKSATYIWKNNFHEKGPGETDESHKESSQHVTQLVLSSKSVCIMQKWGGKREVMYTAFRALGRSVDYVQVCDSDTMLDPASSVEMVKVLEEDPMVGGVGGDVQILNKYDSWISFLSSVRYWMAFNIERACQSYFGCVQCISGPLGMYRNSLLHEFVEDWYSQEFMGNQCSFGDDRHLTNRVLSLGYATKYTARSKCLTETPIEYLRWLNQQTRWSKSYFREWLYNAMWFHKHHLWMTYEAVITGFFPFFLIATVIQLFYRGKIWNILLFLLTVQLVGLIKSSFASCLRGNIVMVFMSLYSVLYMSSLLPAKMFAIATINKAGWGTSGRKTIVVNFIGLIPVSVWFTILLGGVIFTIYKESKKPFSESKQTVLIVGTLLYACYWVMLLTLYVVLINKCGRRKKGQQYDMVLDV</sequence>
<accession>G5AY81</accession>
<comment type="function">
    <text evidence="1 2">Catalyzes the addition of GlcNAc or GlcUA monosaccharides to the nascent hyaluronan polymer. Therefore, it is essential to hyaluronan synthesis a major component of most extracellular matrices that has a structural role in tissues architectures and regulates cell adhesion, migration and differentiation (By similarity). This is one of three isoenzymes responsible for cellular hyaluronan synthesis and it is particularly responsible for the synthesis of high molecular mass hyaluronan (By similarity).</text>
</comment>
<comment type="catalytic activity">
    <reaction evidence="2">
        <text>[hyaluronan](n) + UDP-N-acetyl-alpha-D-glucosamine = N-acetyl-beta-D-glucosaminyl-(1-&gt;4)-[hyaluronan](n) + UDP + H(+)</text>
        <dbReference type="Rhea" id="RHEA:20465"/>
        <dbReference type="Rhea" id="RHEA-COMP:12583"/>
        <dbReference type="Rhea" id="RHEA-COMP:12585"/>
        <dbReference type="ChEBI" id="CHEBI:15378"/>
        <dbReference type="ChEBI" id="CHEBI:57705"/>
        <dbReference type="ChEBI" id="CHEBI:58223"/>
        <dbReference type="ChEBI" id="CHEBI:132153"/>
        <dbReference type="ChEBI" id="CHEBI:132154"/>
        <dbReference type="EC" id="2.4.1.212"/>
    </reaction>
    <physiologicalReaction direction="left-to-right" evidence="2">
        <dbReference type="Rhea" id="RHEA:20466"/>
    </physiologicalReaction>
</comment>
<comment type="catalytic activity">
    <reaction evidence="2">
        <text>N-acetyl-beta-D-glucosaminyl-(1-&gt;4)-[hyaluronan](n) + UDP-alpha-D-glucuronate = [hyaluronan](n+1) + UDP + H(+)</text>
        <dbReference type="Rhea" id="RHEA:12528"/>
        <dbReference type="Rhea" id="RHEA-COMP:12585"/>
        <dbReference type="Rhea" id="RHEA-COMP:12587"/>
        <dbReference type="ChEBI" id="CHEBI:15378"/>
        <dbReference type="ChEBI" id="CHEBI:58052"/>
        <dbReference type="ChEBI" id="CHEBI:58223"/>
        <dbReference type="ChEBI" id="CHEBI:132153"/>
        <dbReference type="ChEBI" id="CHEBI:132154"/>
        <dbReference type="EC" id="2.4.1.212"/>
    </reaction>
    <physiologicalReaction direction="left-to-right" evidence="2">
        <dbReference type="Rhea" id="RHEA:12529"/>
    </physiologicalReaction>
</comment>
<comment type="cofactor">
    <cofactor>
        <name>Mg(2+)</name>
        <dbReference type="ChEBI" id="CHEBI:18420"/>
    </cofactor>
</comment>
<comment type="pathway">
    <text evidence="2">Glycan biosynthesis; hyaluronan biosynthesis.</text>
</comment>
<comment type="subunit">
    <text evidence="2">Homodimer; dimerization promotes enzymatic activity. Forms heterodimer with HAS3. Forms heterodimer with HAS1.</text>
</comment>
<comment type="subcellular location">
    <subcellularLocation>
        <location evidence="2">Cell membrane</location>
        <topology evidence="3">Multi-pass membrane protein</topology>
    </subcellularLocation>
    <subcellularLocation>
        <location evidence="2">Endoplasmic reticulum membrane</location>
        <topology evidence="3">Multi-pass membrane protein</topology>
    </subcellularLocation>
    <subcellularLocation>
        <location evidence="2">Vesicle</location>
    </subcellularLocation>
    <subcellularLocation>
        <location evidence="2">Golgi apparatus membrane</location>
        <topology evidence="3">Multi-pass membrane protein</topology>
    </subcellularLocation>
    <subcellularLocation>
        <location evidence="2">Lysosome</location>
    </subcellularLocation>
    <text evidence="2">Travels from endoplasmic reticulum (ER), Golgi to plasma membrane and either back to endosomes and lysosomes, or out into extracellular vesicles. Post-translational modifications control HAS2 trafficking.</text>
</comment>
<comment type="tissue specificity">
    <text evidence="4">Overexpressed in skin fibroblasts.</text>
</comment>
<comment type="PTM">
    <text evidence="2">Phosphorylation at Thr-328 is essential for hyaluronan synthase activity.</text>
</comment>
<comment type="PTM">
    <text evidence="2">O-GlcNAcylation at Ser-221 increases the stability of HAS2 and plasma membrane localization.</text>
</comment>
<comment type="PTM">
    <text evidence="2">Ubiquitination at Lys-190; this ubiquitination is essential for hyaluronan synthase activity and homo- or hetero-oligomerization. Can also be poly-ubiquitinated. Deubiquitinated by USP17L22/USP17 and USP4. USP17L22/USP17 efficiently removes 'Lys-63'- and 'Lys-48'-linked polyubiquitin chains, whereas USP4 preferentially removes monoubiquitination and, partially, both 'Lys-63'- and 'Lys-48'-linked polyubiquitin chain.</text>
</comment>
<comment type="miscellaneous">
    <text evidence="6">Via the strong production of high molecular mass hyaluronan (HMM-HA) may be in part responsible for the low susceptibility to cancers observed with those rodents.</text>
</comment>
<comment type="similarity">
    <text evidence="5">Belongs to the NodC/HAS family.</text>
</comment>
<comment type="online information" name="Protein Spotlight">
    <link uri="https://www.proteinspotlight.org/back_issues/155/"/>
    <text>an unexpected turn of events - Issue 155 of December 2013</text>
</comment>
<feature type="chain" id="PRO_0000424266" description="Hyaluronan synthase 2">
    <location>
        <begin position="1"/>
        <end position="552"/>
    </location>
</feature>
<feature type="topological domain" description="Cytoplasmic" evidence="3">
    <location>
        <begin position="1"/>
        <end position="11"/>
    </location>
</feature>
<feature type="transmembrane region" description="Helical; Name=1" evidence="3">
    <location>
        <begin position="12"/>
        <end position="32"/>
    </location>
</feature>
<feature type="topological domain" description="Extracellular" evidence="3">
    <location>
        <begin position="33"/>
        <end position="45"/>
    </location>
</feature>
<feature type="transmembrane region" description="Helical; Name=2" evidence="3">
    <location>
        <begin position="46"/>
        <end position="66"/>
    </location>
</feature>
<feature type="topological domain" description="Cytoplasmic" evidence="3">
    <location>
        <begin position="67"/>
        <end position="374"/>
    </location>
</feature>
<feature type="transmembrane region" description="Helical; Name=3" evidence="3">
    <location>
        <begin position="375"/>
        <end position="395"/>
    </location>
</feature>
<feature type="topological domain" description="Extracellular" evidence="3">
    <location>
        <begin position="396"/>
        <end position="402"/>
    </location>
</feature>
<feature type="transmembrane region" description="Helical; Name=4" evidence="3">
    <location>
        <begin position="403"/>
        <end position="423"/>
    </location>
</feature>
<feature type="topological domain" description="Cytoplasmic" evidence="3">
    <location>
        <begin position="424"/>
        <end position="429"/>
    </location>
</feature>
<feature type="transmembrane region" description="Helical; Name=5" evidence="3">
    <location>
        <begin position="430"/>
        <end position="450"/>
    </location>
</feature>
<feature type="topological domain" description="Extracellular" evidence="3">
    <location>
        <begin position="451"/>
        <end position="475"/>
    </location>
</feature>
<feature type="transmembrane region" description="Helical; Name=6" evidence="3">
    <location>
        <begin position="476"/>
        <end position="496"/>
    </location>
</feature>
<feature type="topological domain" description="Cytoplasmic" evidence="3">
    <location>
        <begin position="497"/>
        <end position="510"/>
    </location>
</feature>
<feature type="transmembrane region" description="Helical; Name=7" evidence="3">
    <location>
        <begin position="511"/>
        <end position="531"/>
    </location>
</feature>
<feature type="topological domain" description="Extracellular" evidence="3">
    <location>
        <begin position="532"/>
        <end position="552"/>
    </location>
</feature>
<feature type="modified residue" description="Phosphothreonine" evidence="2">
    <location>
        <position position="110"/>
    </location>
</feature>
<feature type="modified residue" description="Phosphothreonine" evidence="2">
    <location>
        <position position="328"/>
    </location>
</feature>
<feature type="glycosylation site" description="O-linked (GlcNAc) serine" evidence="2">
    <location>
        <position position="221"/>
    </location>
</feature>
<feature type="cross-link" description="Glycyl lysine isopeptide (Lys-Gly) (interchain with G-Cter in ubiquitin)" evidence="2">
    <location>
        <position position="190"/>
    </location>
</feature>
<organism>
    <name type="scientific">Heterocephalus glaber</name>
    <name type="common">Naked mole rat</name>
    <dbReference type="NCBI Taxonomy" id="10181"/>
    <lineage>
        <taxon>Eukaryota</taxon>
        <taxon>Metazoa</taxon>
        <taxon>Chordata</taxon>
        <taxon>Craniata</taxon>
        <taxon>Vertebrata</taxon>
        <taxon>Euteleostomi</taxon>
        <taxon>Mammalia</taxon>
        <taxon>Eutheria</taxon>
        <taxon>Euarchontoglires</taxon>
        <taxon>Glires</taxon>
        <taxon>Rodentia</taxon>
        <taxon>Hystricomorpha</taxon>
        <taxon>Bathyergidae</taxon>
        <taxon>Heterocephalus</taxon>
    </lineage>
</organism>
<evidence type="ECO:0000250" key="1">
    <source>
        <dbReference type="UniProtKB" id="P70312"/>
    </source>
</evidence>
<evidence type="ECO:0000250" key="2">
    <source>
        <dbReference type="UniProtKB" id="Q92819"/>
    </source>
</evidence>
<evidence type="ECO:0000255" key="3"/>
<evidence type="ECO:0000269" key="4">
    <source>
    </source>
</evidence>
<evidence type="ECO:0000305" key="5"/>
<evidence type="ECO:0000305" key="6">
    <source>
    </source>
</evidence>
<reference key="1">
    <citation type="journal article" date="2011" name="Nature">
        <title>Genome sequencing reveals insights into physiology and longevity of the naked mole rat.</title>
        <authorList>
            <person name="Kim E.B."/>
            <person name="Fang X."/>
            <person name="Fushan A.A."/>
            <person name="Huang Z."/>
            <person name="Lobanov A.V."/>
            <person name="Han L."/>
            <person name="Marino S.M."/>
            <person name="Sun X."/>
            <person name="Turanov A.A."/>
            <person name="Yang P."/>
            <person name="Yim S.H."/>
            <person name="Zhao X."/>
            <person name="Kasaikina M.V."/>
            <person name="Stoletzki N."/>
            <person name="Peng C."/>
            <person name="Polak P."/>
            <person name="Xiong Z."/>
            <person name="Kiezun A."/>
            <person name="Zhu Y."/>
            <person name="Chen Y."/>
            <person name="Kryukov G.V."/>
            <person name="Zhang Q."/>
            <person name="Peshkin L."/>
            <person name="Yang L."/>
            <person name="Bronson R.T."/>
            <person name="Buffenstein R."/>
            <person name="Wang B."/>
            <person name="Han C."/>
            <person name="Li Q."/>
            <person name="Chen L."/>
            <person name="Zhao W."/>
            <person name="Sunyaev S.R."/>
            <person name="Park T.J."/>
            <person name="Zhang G."/>
            <person name="Wang J."/>
            <person name="Gladyshev V.N."/>
        </authorList>
    </citation>
    <scope>NUCLEOTIDE SEQUENCE [LARGE SCALE GENOMIC DNA]</scope>
</reference>
<reference key="2">
    <citation type="journal article" date="2013" name="Nature">
        <title>High-molecular-mass hyaluronan mediates the cancer resistance of the naked mole rat.</title>
        <authorList>
            <person name="Tian X."/>
            <person name="Azpurua J."/>
            <person name="Hine C."/>
            <person name="Vaidya A."/>
            <person name="Myakishev-Rempel M."/>
            <person name="Ablaeva J."/>
            <person name="Mao Z."/>
            <person name="Nevo E."/>
            <person name="Gorbunova V."/>
            <person name="Seluanov A."/>
        </authorList>
    </citation>
    <scope>FUNCTION</scope>
    <scope>TISSUE SPECIFICITY</scope>
</reference>
<protein>
    <recommendedName>
        <fullName>Hyaluronan synthase 2</fullName>
        <ecNumber evidence="2">2.4.1.212</ecNumber>
    </recommendedName>
    <alternativeName>
        <fullName>Hyaluronate synthase 2</fullName>
    </alternativeName>
    <alternativeName>
        <fullName>Hyaluronic acid synthase 2</fullName>
    </alternativeName>
</protein>
<proteinExistence type="evidence at transcript level"/>
<keyword id="KW-1003">Cell membrane</keyword>
<keyword id="KW-0256">Endoplasmic reticulum</keyword>
<keyword id="KW-0325">Glycoprotein</keyword>
<keyword id="KW-0328">Glycosyltransferase</keyword>
<keyword id="KW-0333">Golgi apparatus</keyword>
<keyword id="KW-1017">Isopeptide bond</keyword>
<keyword id="KW-0458">Lysosome</keyword>
<keyword id="KW-0472">Membrane</keyword>
<keyword id="KW-0597">Phosphoprotein</keyword>
<keyword id="KW-1185">Reference proteome</keyword>
<keyword id="KW-0808">Transferase</keyword>
<keyword id="KW-0812">Transmembrane</keyword>
<keyword id="KW-1133">Transmembrane helix</keyword>
<keyword id="KW-0832">Ubl conjugation</keyword>
<name>HYAS2_HETGA</name>
<dbReference type="EC" id="2.4.1.212" evidence="2"/>
<dbReference type="EMBL" id="JH167500">
    <property type="protein sequence ID" value="EHB01992.1"/>
    <property type="molecule type" value="Genomic_DNA"/>
</dbReference>
<dbReference type="SMR" id="G5AY81"/>
<dbReference type="FunCoup" id="G5AY81">
    <property type="interactions" value="83"/>
</dbReference>
<dbReference type="STRING" id="10181.G5AY81"/>
<dbReference type="GlyCosmos" id="G5AY81">
    <property type="glycosylation" value="1 site, No reported glycans"/>
</dbReference>
<dbReference type="eggNOG" id="KOG2571">
    <property type="taxonomic scope" value="Eukaryota"/>
</dbReference>
<dbReference type="InParanoid" id="G5AY81"/>
<dbReference type="OMA" id="KSATYVW"/>
<dbReference type="UniPathway" id="UPA00341"/>
<dbReference type="Proteomes" id="UP000006813">
    <property type="component" value="Unassembled WGS sequence"/>
</dbReference>
<dbReference type="Proteomes" id="UP000694906">
    <property type="component" value="Unplaced"/>
</dbReference>
<dbReference type="GO" id="GO:0031410">
    <property type="term" value="C:cytoplasmic vesicle"/>
    <property type="evidence" value="ECO:0007669"/>
    <property type="project" value="Ensembl"/>
</dbReference>
<dbReference type="GO" id="GO:0005789">
    <property type="term" value="C:endoplasmic reticulum membrane"/>
    <property type="evidence" value="ECO:0007669"/>
    <property type="project" value="UniProtKB-SubCell"/>
</dbReference>
<dbReference type="GO" id="GO:1903561">
    <property type="term" value="C:extracellular vesicle"/>
    <property type="evidence" value="ECO:0000250"/>
    <property type="project" value="UniProtKB"/>
</dbReference>
<dbReference type="GO" id="GO:0005794">
    <property type="term" value="C:Golgi apparatus"/>
    <property type="evidence" value="ECO:0000250"/>
    <property type="project" value="UniProtKB"/>
</dbReference>
<dbReference type="GO" id="GO:0000139">
    <property type="term" value="C:Golgi membrane"/>
    <property type="evidence" value="ECO:0007669"/>
    <property type="project" value="UniProtKB-SubCell"/>
</dbReference>
<dbReference type="GO" id="GO:0005764">
    <property type="term" value="C:lysosome"/>
    <property type="evidence" value="ECO:0007669"/>
    <property type="project" value="UniProtKB-SubCell"/>
</dbReference>
<dbReference type="GO" id="GO:0005886">
    <property type="term" value="C:plasma membrane"/>
    <property type="evidence" value="ECO:0000250"/>
    <property type="project" value="UniProtKB"/>
</dbReference>
<dbReference type="GO" id="GO:0044853">
    <property type="term" value="C:plasma membrane raft"/>
    <property type="evidence" value="ECO:0007669"/>
    <property type="project" value="Ensembl"/>
</dbReference>
<dbReference type="GO" id="GO:0050501">
    <property type="term" value="F:hyaluronan synthase activity"/>
    <property type="evidence" value="ECO:0000250"/>
    <property type="project" value="UniProtKB"/>
</dbReference>
<dbReference type="GO" id="GO:0036302">
    <property type="term" value="P:atrioventricular canal development"/>
    <property type="evidence" value="ECO:0000250"/>
    <property type="project" value="UniProtKB"/>
</dbReference>
<dbReference type="GO" id="GO:0060349">
    <property type="term" value="P:bone morphogenesis"/>
    <property type="evidence" value="ECO:0007669"/>
    <property type="project" value="Ensembl"/>
</dbReference>
<dbReference type="GO" id="GO:0090500">
    <property type="term" value="P:endocardial cushion to mesenchymal transition"/>
    <property type="evidence" value="ECO:0000250"/>
    <property type="project" value="UniProtKB"/>
</dbReference>
<dbReference type="GO" id="GO:0085029">
    <property type="term" value="P:extracellular matrix assembly"/>
    <property type="evidence" value="ECO:0000250"/>
    <property type="project" value="UniProtKB"/>
</dbReference>
<dbReference type="GO" id="GO:0030213">
    <property type="term" value="P:hyaluronan biosynthetic process"/>
    <property type="evidence" value="ECO:0000250"/>
    <property type="project" value="UniProtKB"/>
</dbReference>
<dbReference type="GO" id="GO:0000271">
    <property type="term" value="P:polysaccharide biosynthetic process"/>
    <property type="evidence" value="ECO:0000250"/>
    <property type="project" value="UniProtKB"/>
</dbReference>
<dbReference type="GO" id="GO:0035810">
    <property type="term" value="P:positive regulation of urine volume"/>
    <property type="evidence" value="ECO:0000250"/>
    <property type="project" value="UniProtKB"/>
</dbReference>
<dbReference type="GO" id="GO:0070295">
    <property type="term" value="P:renal water absorption"/>
    <property type="evidence" value="ECO:0000250"/>
    <property type="project" value="UniProtKB"/>
</dbReference>
<dbReference type="GO" id="GO:0001570">
    <property type="term" value="P:vasculogenesis"/>
    <property type="evidence" value="ECO:0000250"/>
    <property type="project" value="UniProtKB"/>
</dbReference>
<dbReference type="CDD" id="cd06434">
    <property type="entry name" value="GT2_HAS"/>
    <property type="match status" value="1"/>
</dbReference>
<dbReference type="Gene3D" id="3.90.550.10">
    <property type="entry name" value="Spore Coat Polysaccharide Biosynthesis Protein SpsA, Chain A"/>
    <property type="match status" value="1"/>
</dbReference>
<dbReference type="InterPro" id="IPR001173">
    <property type="entry name" value="Glyco_trans_2-like"/>
</dbReference>
<dbReference type="InterPro" id="IPR029044">
    <property type="entry name" value="Nucleotide-diphossugar_trans"/>
</dbReference>
<dbReference type="PANTHER" id="PTHR22913">
    <property type="entry name" value="HYALURONAN SYNTHASE"/>
    <property type="match status" value="1"/>
</dbReference>
<dbReference type="PANTHER" id="PTHR22913:SF7">
    <property type="entry name" value="HYALURONAN SYNTHASE 2"/>
    <property type="match status" value="1"/>
</dbReference>
<dbReference type="Pfam" id="PF03142">
    <property type="entry name" value="Chitin_synth_2"/>
    <property type="match status" value="1"/>
</dbReference>
<dbReference type="Pfam" id="PF00535">
    <property type="entry name" value="Glycos_transf_2"/>
    <property type="match status" value="1"/>
</dbReference>
<dbReference type="SUPFAM" id="SSF53448">
    <property type="entry name" value="Nucleotide-diphospho-sugar transferases"/>
    <property type="match status" value="1"/>
</dbReference>